<accession>A4W428</accession>
<organism>
    <name type="scientific">Streptococcus suis (strain 98HAH33)</name>
    <dbReference type="NCBI Taxonomy" id="391296"/>
    <lineage>
        <taxon>Bacteria</taxon>
        <taxon>Bacillati</taxon>
        <taxon>Bacillota</taxon>
        <taxon>Bacilli</taxon>
        <taxon>Lactobacillales</taxon>
        <taxon>Streptococcaceae</taxon>
        <taxon>Streptococcus</taxon>
    </lineage>
</organism>
<reference key="1">
    <citation type="journal article" date="2007" name="PLoS ONE">
        <title>A glimpse of streptococcal toxic shock syndrome from comparative genomics of S. suis 2 Chinese isolates.</title>
        <authorList>
            <person name="Chen C."/>
            <person name="Tang J."/>
            <person name="Dong W."/>
            <person name="Wang C."/>
            <person name="Feng Y."/>
            <person name="Wang J."/>
            <person name="Zheng F."/>
            <person name="Pan X."/>
            <person name="Liu D."/>
            <person name="Li M."/>
            <person name="Song Y."/>
            <person name="Zhu X."/>
            <person name="Sun H."/>
            <person name="Feng T."/>
            <person name="Guo Z."/>
            <person name="Ju A."/>
            <person name="Ge J."/>
            <person name="Dong Y."/>
            <person name="Sun W."/>
            <person name="Jiang Y."/>
            <person name="Wang J."/>
            <person name="Yan J."/>
            <person name="Yang H."/>
            <person name="Wang X."/>
            <person name="Gao G.F."/>
            <person name="Yang R."/>
            <person name="Wang J."/>
            <person name="Yu J."/>
        </authorList>
    </citation>
    <scope>NUCLEOTIDE SEQUENCE [LARGE SCALE GENOMIC DNA]</scope>
    <source>
        <strain>98HAH33</strain>
    </source>
</reference>
<proteinExistence type="inferred from homology"/>
<feature type="chain" id="PRO_1000048490" description="DNA polymerase III PolC-type">
    <location>
        <begin position="1"/>
        <end position="1463"/>
    </location>
</feature>
<feature type="domain" description="Exonuclease">
    <location>
        <begin position="425"/>
        <end position="581"/>
    </location>
</feature>
<protein>
    <recommendedName>
        <fullName evidence="1">DNA polymerase III PolC-type</fullName>
        <shortName evidence="1">PolIII</shortName>
        <ecNumber evidence="1">2.7.7.7</ecNumber>
    </recommendedName>
</protein>
<dbReference type="EC" id="2.7.7.7" evidence="1"/>
<dbReference type="EMBL" id="CP000408">
    <property type="protein sequence ID" value="ABP93117.1"/>
    <property type="molecule type" value="Genomic_DNA"/>
</dbReference>
<dbReference type="SMR" id="A4W428"/>
<dbReference type="KEGG" id="ssv:SSU98_1959"/>
<dbReference type="HOGENOM" id="CLU_003297_2_0_9"/>
<dbReference type="GO" id="GO:0005737">
    <property type="term" value="C:cytoplasm"/>
    <property type="evidence" value="ECO:0007669"/>
    <property type="project" value="UniProtKB-SubCell"/>
</dbReference>
<dbReference type="GO" id="GO:0008408">
    <property type="term" value="F:3'-5' exonuclease activity"/>
    <property type="evidence" value="ECO:0007669"/>
    <property type="project" value="UniProtKB-UniRule"/>
</dbReference>
<dbReference type="GO" id="GO:0003677">
    <property type="term" value="F:DNA binding"/>
    <property type="evidence" value="ECO:0007669"/>
    <property type="project" value="UniProtKB-UniRule"/>
</dbReference>
<dbReference type="GO" id="GO:0003887">
    <property type="term" value="F:DNA-directed DNA polymerase activity"/>
    <property type="evidence" value="ECO:0007669"/>
    <property type="project" value="UniProtKB-UniRule"/>
</dbReference>
<dbReference type="GO" id="GO:0006261">
    <property type="term" value="P:DNA-templated DNA replication"/>
    <property type="evidence" value="ECO:0007669"/>
    <property type="project" value="UniProtKB-UniRule"/>
</dbReference>
<dbReference type="CDD" id="cd06127">
    <property type="entry name" value="DEDDh"/>
    <property type="match status" value="1"/>
</dbReference>
<dbReference type="CDD" id="cd07435">
    <property type="entry name" value="PHP_PolIIIA_POLC"/>
    <property type="match status" value="1"/>
</dbReference>
<dbReference type="CDD" id="cd04484">
    <property type="entry name" value="polC_OBF"/>
    <property type="match status" value="1"/>
</dbReference>
<dbReference type="FunFam" id="3.30.420.10:FF:000045">
    <property type="entry name" value="3'-5' exonuclease DinG"/>
    <property type="match status" value="1"/>
</dbReference>
<dbReference type="Gene3D" id="1.10.150.870">
    <property type="match status" value="1"/>
</dbReference>
<dbReference type="Gene3D" id="3.30.1900.20">
    <property type="match status" value="1"/>
</dbReference>
<dbReference type="Gene3D" id="6.10.140.1510">
    <property type="match status" value="1"/>
</dbReference>
<dbReference type="Gene3D" id="3.20.20.140">
    <property type="entry name" value="Metal-dependent hydrolases"/>
    <property type="match status" value="2"/>
</dbReference>
<dbReference type="Gene3D" id="2.40.50.140">
    <property type="entry name" value="Nucleic acid-binding proteins"/>
    <property type="match status" value="1"/>
</dbReference>
<dbReference type="Gene3D" id="1.10.150.700">
    <property type="entry name" value="PolC, middle finger domain"/>
    <property type="match status" value="1"/>
</dbReference>
<dbReference type="Gene3D" id="3.30.420.10">
    <property type="entry name" value="Ribonuclease H-like superfamily/Ribonuclease H"/>
    <property type="match status" value="1"/>
</dbReference>
<dbReference type="HAMAP" id="MF_00356">
    <property type="entry name" value="DNApol_PolC"/>
    <property type="match status" value="1"/>
</dbReference>
<dbReference type="InterPro" id="IPR011708">
    <property type="entry name" value="DNA_pol3_alpha_NTPase_dom"/>
</dbReference>
<dbReference type="InterPro" id="IPR040982">
    <property type="entry name" value="DNA_pol3_finger"/>
</dbReference>
<dbReference type="InterPro" id="IPR024754">
    <property type="entry name" value="DNA_PolC-like_N_II"/>
</dbReference>
<dbReference type="InterPro" id="IPR028112">
    <property type="entry name" value="DNA_PolC-type_N_I"/>
</dbReference>
<dbReference type="InterPro" id="IPR004805">
    <property type="entry name" value="DnaE2/DnaE/PolC"/>
</dbReference>
<dbReference type="InterPro" id="IPR029460">
    <property type="entry name" value="DNAPol_HHH"/>
</dbReference>
<dbReference type="InterPro" id="IPR006054">
    <property type="entry name" value="DnaQ"/>
</dbReference>
<dbReference type="InterPro" id="IPR013520">
    <property type="entry name" value="Exonuclease_RNaseT/DNA_pol3"/>
</dbReference>
<dbReference type="InterPro" id="IPR012340">
    <property type="entry name" value="NA-bd_OB-fold"/>
</dbReference>
<dbReference type="InterPro" id="IPR004365">
    <property type="entry name" value="NA-bd_OB_tRNA"/>
</dbReference>
<dbReference type="InterPro" id="IPR004013">
    <property type="entry name" value="PHP_dom"/>
</dbReference>
<dbReference type="InterPro" id="IPR003141">
    <property type="entry name" value="Pol/His_phosphatase_N"/>
</dbReference>
<dbReference type="InterPro" id="IPR016195">
    <property type="entry name" value="Pol/histidinol_Pase-like"/>
</dbReference>
<dbReference type="InterPro" id="IPR006308">
    <property type="entry name" value="Pol_III_a_PolC-type_gram_pos"/>
</dbReference>
<dbReference type="InterPro" id="IPR044923">
    <property type="entry name" value="PolC_middle_finger_sf"/>
</dbReference>
<dbReference type="InterPro" id="IPR012337">
    <property type="entry name" value="RNaseH-like_sf"/>
</dbReference>
<dbReference type="InterPro" id="IPR036397">
    <property type="entry name" value="RNaseH_sf"/>
</dbReference>
<dbReference type="NCBIfam" id="TIGR00573">
    <property type="entry name" value="dnaq"/>
    <property type="match status" value="1"/>
</dbReference>
<dbReference type="NCBIfam" id="TIGR01405">
    <property type="entry name" value="polC_Gram_pos"/>
    <property type="match status" value="1"/>
</dbReference>
<dbReference type="NCBIfam" id="NF001688">
    <property type="entry name" value="PRK00448.1"/>
    <property type="match status" value="1"/>
</dbReference>
<dbReference type="PANTHER" id="PTHR32294:SF5">
    <property type="entry name" value="DNA POLYMERASE III POLC-TYPE"/>
    <property type="match status" value="1"/>
</dbReference>
<dbReference type="PANTHER" id="PTHR32294">
    <property type="entry name" value="DNA POLYMERASE III SUBUNIT ALPHA"/>
    <property type="match status" value="1"/>
</dbReference>
<dbReference type="Pfam" id="PF14480">
    <property type="entry name" value="DNA_pol3_a_NI"/>
    <property type="match status" value="1"/>
</dbReference>
<dbReference type="Pfam" id="PF11490">
    <property type="entry name" value="DNA_pol3_a_NII"/>
    <property type="match status" value="1"/>
</dbReference>
<dbReference type="Pfam" id="PF07733">
    <property type="entry name" value="DNA_pol3_alpha"/>
    <property type="match status" value="2"/>
</dbReference>
<dbReference type="Pfam" id="PF17657">
    <property type="entry name" value="DNA_pol3_finger"/>
    <property type="match status" value="1"/>
</dbReference>
<dbReference type="Pfam" id="PF14579">
    <property type="entry name" value="HHH_6"/>
    <property type="match status" value="1"/>
</dbReference>
<dbReference type="Pfam" id="PF02811">
    <property type="entry name" value="PHP"/>
    <property type="match status" value="1"/>
</dbReference>
<dbReference type="Pfam" id="PF00929">
    <property type="entry name" value="RNase_T"/>
    <property type="match status" value="1"/>
</dbReference>
<dbReference type="Pfam" id="PF01336">
    <property type="entry name" value="tRNA_anti-codon"/>
    <property type="match status" value="1"/>
</dbReference>
<dbReference type="SMART" id="SM00479">
    <property type="entry name" value="EXOIII"/>
    <property type="match status" value="1"/>
</dbReference>
<dbReference type="SMART" id="SM00481">
    <property type="entry name" value="POLIIIAc"/>
    <property type="match status" value="1"/>
</dbReference>
<dbReference type="SUPFAM" id="SSF50249">
    <property type="entry name" value="Nucleic acid-binding proteins"/>
    <property type="match status" value="1"/>
</dbReference>
<dbReference type="SUPFAM" id="SSF89550">
    <property type="entry name" value="PHP domain-like"/>
    <property type="match status" value="1"/>
</dbReference>
<dbReference type="SUPFAM" id="SSF53098">
    <property type="entry name" value="Ribonuclease H-like"/>
    <property type="match status" value="1"/>
</dbReference>
<name>DPO3_STRS2</name>
<keyword id="KW-0963">Cytoplasm</keyword>
<keyword id="KW-0235">DNA replication</keyword>
<keyword id="KW-0239">DNA-directed DNA polymerase</keyword>
<keyword id="KW-0269">Exonuclease</keyword>
<keyword id="KW-0378">Hydrolase</keyword>
<keyword id="KW-0540">Nuclease</keyword>
<keyword id="KW-0548">Nucleotidyltransferase</keyword>
<keyword id="KW-0808">Transferase</keyword>
<comment type="function">
    <text evidence="1">Required for replicative DNA synthesis. This DNA polymerase also exhibits 3' to 5' exonuclease activity.</text>
</comment>
<comment type="catalytic activity">
    <reaction evidence="1">
        <text>DNA(n) + a 2'-deoxyribonucleoside 5'-triphosphate = DNA(n+1) + diphosphate</text>
        <dbReference type="Rhea" id="RHEA:22508"/>
        <dbReference type="Rhea" id="RHEA-COMP:17339"/>
        <dbReference type="Rhea" id="RHEA-COMP:17340"/>
        <dbReference type="ChEBI" id="CHEBI:33019"/>
        <dbReference type="ChEBI" id="CHEBI:61560"/>
        <dbReference type="ChEBI" id="CHEBI:173112"/>
        <dbReference type="EC" id="2.7.7.7"/>
    </reaction>
</comment>
<comment type="subcellular location">
    <subcellularLocation>
        <location evidence="1">Cytoplasm</location>
    </subcellularLocation>
</comment>
<comment type="similarity">
    <text evidence="1">Belongs to the DNA polymerase type-C family. PolC subfamily.</text>
</comment>
<sequence length="1463" mass="164109">MSDKFQLLLQQIGMPLDARQSGAFSTATIEKVVLHKVSKLWEFTFRFETPLPLMDYQLFKARLATEFEKVGNKIQFSIVSDAEAFEAGLVEAYYPEAFTEDLCQSAGFKALFQPLEVAYRDGVLWIKGPETIDTDHFRKNHLPNLVEQYKRFGFGNLAVDIQVCQEMTQQQAEIFHAQNAEIYQQANEENLAALEQLAQMAPPPEAAQPFVPEYKKNRPAKVNIEKAEITPMIEVDSEENRIVFEGLVFEVEQKTTKTGRVIINFKMTDYTSSFTLQKWAKNEEEAQKFDMVKKGNWLRVRGNVETNNFTRDLTMNVQEVQEVKKEIRKDLMPEGEKRVEFHAHTNMSTMDALPAVEDLVARAAAWGHKAVAITDHGNVQSFPHGYHAARKAGIKPLFGMEANIVEDSVPIAYNEADVVLSDATYVVFDVETTGLSAVNNALIQIAASKMHKGNIIAEFDEFIDPGHPLSQFTTDLTGITDEHVRGSKPLEQVLREFQDFCQDSVMVAHNATFDVGFMNVNYERAGLPIISQPVIDTLEFARNLYPDFKRHGLGPLTKRFGVALEHHHMANYDAEATGRLLFIFLKDALEKHNLTNLNQLNTELIAEDSYKKARVKHATLYVINQVGLKNMFKLVSLSNTKYFEGVPRIPRTVLNAHREGLILGTACQEGEVFDDLLSKGIDEAVKTAAYYDFIEVMPPALYAPMIAKEQFKDMAEIEETIKQLIEVGRRAGLPVLATGNVHYIDPEEEIYREIIVRALGQGAPINWTIGNGENAQPAPLPKAHFRTTSEMLDEFAFLGESLAREIVITNPNAMLDRFEDVQVVKTDLYTPYIEKAEETVAELTYQKAFEIYGNPLPDIIDLRIEKELTSILGNGFAVIYLASQMLVHRSNERGYLVGSRGSVGSSFVATMIGITEVNPMPPHYVCPNCQHSEFITDGSYGSGFDLPDKDCEKCGTKYKKDGQDIPFETFLGFDGDKVPDIDLNFSGDDQPSAHLDVRDIFGEENAFRAGTVGTVAAKTAYGFVRGYERDYGKFYRDVEVERLAAGAAGVKRTTGQHPGGIIVFPDYMDVYDFTPVQYPADDVTASWQTTHFNFHDIDENVLKLDILGHDDPTMVRKLQDLSGIDPQTIPADDKGVMALFSGTEILGVTPEQIGTPTGMLGIPEFGTNFVRGMVEETKPTTFSELLQLSGLSHGTDVWLGNAQDLIKAGIANLSTVIGCRDDIMVYLMHAGLPPKMAFNIMERVRKGLWLKISEEERNGYIQAMKDNKVPDWYIESCGKIKYMFPKAHAAAYVMMALRVAYFKVHHPLYYYCAYFSIRAKAFDLATMSGGLERVKAKMEEIALKKKNNEASNVEQDLYTTLELVNEMLERGFKFGKLDLYKSHATDFLIEEDTLIPPFVAMDGLGENVAKQVVAARAEGEFLSKTELRKRGGLSGTLVEKMDEMGILGKMPEDNQLSLFDDLF</sequence>
<gene>
    <name evidence="1" type="primary">polC</name>
    <name type="ordered locus">SSU98_1959</name>
</gene>
<evidence type="ECO:0000255" key="1">
    <source>
        <dbReference type="HAMAP-Rule" id="MF_00356"/>
    </source>
</evidence>